<comment type="function">
    <text>Involved in hydrogen uptake for the anaerobic reduction of sulfate to hydrogen sulfide in an electron transport chain. Cytochrome c3 is the physiological electron acceptor.</text>
</comment>
<comment type="catalytic activity">
    <reaction>
        <text>2 Fe(III)-[cytochrome c3] + H2 = 2 Fe(II)-[cytochrome c3] + 2 H(+)</text>
        <dbReference type="Rhea" id="RHEA:20625"/>
        <dbReference type="Rhea" id="RHEA-COMP:11576"/>
        <dbReference type="Rhea" id="RHEA-COMP:11577"/>
        <dbReference type="ChEBI" id="CHEBI:15378"/>
        <dbReference type="ChEBI" id="CHEBI:18276"/>
        <dbReference type="ChEBI" id="CHEBI:29033"/>
        <dbReference type="ChEBI" id="CHEBI:29034"/>
        <dbReference type="EC" id="1.12.2.1"/>
    </reaction>
</comment>
<comment type="cofactor">
    <cofactor>
        <name>[4Fe-4S] cluster</name>
        <dbReference type="ChEBI" id="CHEBI:49883"/>
    </cofactor>
    <text>Binds 2 [4Fe-4S] clusters per subunit.</text>
</comment>
<comment type="cofactor">
    <cofactor>
        <name>[3Fe-4S] cluster</name>
        <dbReference type="ChEBI" id="CHEBI:21137"/>
    </cofactor>
    <text>Binds 1 [3Fe-4S] cluster per subunit.</text>
</comment>
<comment type="biophysicochemical properties">
    <redoxPotential>
        <text evidence="4">E(0) is about +65 mV for the 3Fe-4S, and -340 mV for the 4Fe-4S clusters.</text>
    </redoxPotential>
</comment>
<comment type="subunit">
    <text evidence="2 4">Heterodimer of a large and a small subunit.</text>
</comment>
<comment type="subcellular location">
    <subcellularLocation>
        <location>Periplasm</location>
    </subcellularLocation>
</comment>
<comment type="PTM">
    <text>Predicted to be exported by the Tat system. The position of the signal peptide cleavage has been experimentally proven.</text>
</comment>
<comment type="similarity">
    <text evidence="5">Belongs to the [NiFe]/[NiFeSe] hydrogenase small subunit family.</text>
</comment>
<organism>
    <name type="scientific">Solidesulfovibrio fructosivorans</name>
    <name type="common">Desulfovibrio fructosivorans</name>
    <dbReference type="NCBI Taxonomy" id="878"/>
    <lineage>
        <taxon>Bacteria</taxon>
        <taxon>Pseudomonadati</taxon>
        <taxon>Thermodesulfobacteriota</taxon>
        <taxon>Desulfovibrionia</taxon>
        <taxon>Desulfovibrionales</taxon>
        <taxon>Desulfovibrionaceae</taxon>
        <taxon>Solidesulfovibrio</taxon>
    </lineage>
</organism>
<feature type="signal peptide" description="Tat-type signal" evidence="1 3">
    <location>
        <begin position="1"/>
        <end position="49"/>
    </location>
</feature>
<feature type="chain" id="PRO_0000013415" description="Periplasmic [NiFe] hydrogenase small subunit">
    <location>
        <begin position="50"/>
        <end position="314"/>
    </location>
</feature>
<feature type="binding site">
    <location>
        <position position="67"/>
    </location>
    <ligand>
        <name>[4Fe-4S] cluster</name>
        <dbReference type="ChEBI" id="CHEBI:49883"/>
        <label>1</label>
    </ligand>
</feature>
<feature type="binding site">
    <location>
        <position position="70"/>
    </location>
    <ligand>
        <name>[4Fe-4S] cluster</name>
        <dbReference type="ChEBI" id="CHEBI:49883"/>
        <label>1</label>
    </ligand>
</feature>
<feature type="binding site">
    <location>
        <position position="164"/>
    </location>
    <ligand>
        <name>[4Fe-4S] cluster</name>
        <dbReference type="ChEBI" id="CHEBI:49883"/>
        <label>1</label>
    </ligand>
</feature>
<feature type="binding site">
    <location>
        <position position="197"/>
    </location>
    <ligand>
        <name>[4Fe-4S] cluster</name>
        <dbReference type="ChEBI" id="CHEBI:49883"/>
        <label>1</label>
    </ligand>
</feature>
<feature type="binding site">
    <location>
        <position position="234"/>
    </location>
    <ligand>
        <name>[4Fe-4S] cluster</name>
        <dbReference type="ChEBI" id="CHEBI:49883"/>
        <label>2</label>
    </ligand>
</feature>
<feature type="binding site">
    <location>
        <position position="237"/>
    </location>
    <ligand>
        <name>[4Fe-4S] cluster</name>
        <dbReference type="ChEBI" id="CHEBI:49883"/>
        <label>2</label>
    </ligand>
</feature>
<feature type="binding site">
    <location>
        <position position="262"/>
    </location>
    <ligand>
        <name>[4Fe-4S] cluster</name>
        <dbReference type="ChEBI" id="CHEBI:49883"/>
        <label>2</label>
    </ligand>
</feature>
<feature type="binding site">
    <location>
        <position position="268"/>
    </location>
    <ligand>
        <name>[4Fe-4S] cluster</name>
        <dbReference type="ChEBI" id="CHEBI:49883"/>
        <label>2</label>
    </ligand>
</feature>
<feature type="binding site">
    <location>
        <position position="277"/>
    </location>
    <ligand>
        <name>[3Fe-4S] cluster</name>
        <dbReference type="ChEBI" id="CHEBI:21137"/>
    </ligand>
</feature>
<feature type="binding site">
    <location>
        <position position="295"/>
    </location>
    <ligand>
        <name>[3Fe-4S] cluster</name>
        <dbReference type="ChEBI" id="CHEBI:21137"/>
    </ligand>
</feature>
<feature type="binding site">
    <location>
        <position position="298"/>
    </location>
    <ligand>
        <name>[3Fe-4S] cluster</name>
        <dbReference type="ChEBI" id="CHEBI:21137"/>
    </ligand>
</feature>
<feature type="mutagenesis site" description="Decreased hydrogen uptake and increased hydrogen production." evidence="4">
    <original>P</original>
    <variation>C</variation>
    <location>
        <position position="238"/>
    </location>
</feature>
<feature type="strand" evidence="7">
    <location>
        <begin position="58"/>
        <end position="63"/>
    </location>
</feature>
<feature type="helix" evidence="7">
    <location>
        <begin position="69"/>
        <end position="74"/>
    </location>
</feature>
<feature type="turn" evidence="7">
    <location>
        <begin position="78"/>
        <end position="81"/>
    </location>
</feature>
<feature type="helix" evidence="7">
    <location>
        <begin position="82"/>
        <end position="88"/>
    </location>
</feature>
<feature type="strand" evidence="7">
    <location>
        <begin position="91"/>
        <end position="94"/>
    </location>
</feature>
<feature type="turn" evidence="7">
    <location>
        <begin position="96"/>
        <end position="98"/>
    </location>
</feature>
<feature type="helix" evidence="7">
    <location>
        <begin position="103"/>
        <end position="114"/>
    </location>
</feature>
<feature type="strand" evidence="7">
    <location>
        <begin position="121"/>
        <end position="129"/>
    </location>
</feature>
<feature type="helix" evidence="7">
    <location>
        <begin position="131"/>
        <end position="134"/>
    </location>
</feature>
<feature type="strand" evidence="7">
    <location>
        <begin position="137"/>
        <end position="139"/>
    </location>
</feature>
<feature type="helix" evidence="7">
    <location>
        <begin position="144"/>
        <end position="154"/>
    </location>
</feature>
<feature type="strand" evidence="7">
    <location>
        <begin position="158"/>
        <end position="161"/>
    </location>
</feature>
<feature type="helix" evidence="7">
    <location>
        <begin position="162"/>
        <end position="167"/>
    </location>
</feature>
<feature type="helix" evidence="7">
    <location>
        <begin position="170"/>
        <end position="172"/>
    </location>
</feature>
<feature type="helix" evidence="7">
    <location>
        <begin position="183"/>
        <end position="187"/>
    </location>
</feature>
<feature type="strand" evidence="7">
    <location>
        <begin position="192"/>
        <end position="194"/>
    </location>
</feature>
<feature type="strand" evidence="7">
    <location>
        <begin position="196"/>
        <end position="198"/>
    </location>
</feature>
<feature type="helix" evidence="7">
    <location>
        <begin position="201"/>
        <end position="213"/>
    </location>
</feature>
<feature type="helix" evidence="7">
    <location>
        <begin position="226"/>
        <end position="229"/>
    </location>
</feature>
<feature type="strand" evidence="7">
    <location>
        <begin position="230"/>
        <end position="232"/>
    </location>
</feature>
<feature type="helix" evidence="7">
    <location>
        <begin position="234"/>
        <end position="236"/>
    </location>
</feature>
<feature type="helix" evidence="7">
    <location>
        <begin position="240"/>
        <end position="244"/>
    </location>
</feature>
<feature type="strand" evidence="6">
    <location>
        <begin position="250"/>
        <end position="254"/>
    </location>
</feature>
<feature type="helix" evidence="7">
    <location>
        <begin position="255"/>
        <end position="258"/>
    </location>
</feature>
<feature type="helix" evidence="7">
    <location>
        <begin position="264"/>
        <end position="266"/>
    </location>
</feature>
<feature type="helix" evidence="7">
    <location>
        <begin position="270"/>
        <end position="272"/>
    </location>
</feature>
<feature type="helix" evidence="7">
    <location>
        <begin position="277"/>
        <end position="280"/>
    </location>
</feature>
<feature type="turn" evidence="7">
    <location>
        <begin position="283"/>
        <end position="285"/>
    </location>
</feature>
<feature type="turn" evidence="7">
    <location>
        <begin position="288"/>
        <end position="292"/>
    </location>
</feature>
<feature type="helix" evidence="7">
    <location>
        <begin position="303"/>
        <end position="306"/>
    </location>
</feature>
<reference key="1">
    <citation type="journal article" date="1990" name="Gene">
        <title>Cloning and sequencing of the locus encoding the large and small subunit genes of the periplasmic [NiFe]hydrogenase from Desulfovibrio fructosovorans.</title>
        <authorList>
            <person name="Rousset M."/>
            <person name="Dermoun Z."/>
            <person name="Matchikian C.E."/>
            <person name="Belaich J.-P."/>
        </authorList>
    </citation>
    <scope>NUCLEOTIDE SEQUENCE [GENOMIC DNA]</scope>
    <source>
        <strain>ATCC 49200 / DSM 3604 / VKM B-1801 / JJ</strain>
    </source>
</reference>
<reference key="2">
    <citation type="journal article" date="1990" name="Eur. J. Biochem.">
        <title>Characterization of the nickel-iron periplasmic hydrogenase from Desulfovibrio fructosovorans.</title>
        <authorList>
            <person name="Hatchikian C.E."/>
            <person name="Traore A.S."/>
            <person name="Fernandez V.M."/>
            <person name="Cammack R."/>
        </authorList>
    </citation>
    <scope>PROTEIN SEQUENCE OF 50-60</scope>
</reference>
<reference key="3">
    <citation type="journal article" date="1998" name="Proc. Natl. Acad. Sci. U.S.A.">
        <title>[3Fe-4S] to [4Fe-4S] cluster conversion in Desulfovibrio fructosovorans [NiFe] hydrogenase by site-directed mutagenesis.</title>
        <authorList>
            <person name="Rousset M."/>
            <person name="Montet Y."/>
            <person name="Guigliarelli B."/>
            <person name="Forget N."/>
            <person name="Asso M."/>
            <person name="Bertrand P."/>
            <person name="Fontecilla-Camps J.C."/>
            <person name="Hatchikian E.C."/>
        </authorList>
    </citation>
    <scope>X-RAY CRYSTALLOGRAPHY (2.7 ANGSTROMS) OF 51-314 IN COMPLEX WITH HYDB AND IRON-SULFUR CLUSTERS</scope>
    <scope>BIOPHYSICOCHEMICAL PROPERTIES</scope>
    <scope>MUTAGENESIS OF PRO-238</scope>
</reference>
<reference key="4">
    <citation type="journal article" date="2005" name="J. Biol. Inorg. Chem.">
        <title>Structural differences between the ready and unready oxidized states of [NiFe] hydrogenases.</title>
        <authorList>
            <person name="Volbeda A."/>
            <person name="Martin L."/>
            <person name="Cavazza C."/>
            <person name="Matho M."/>
            <person name="Faber B.W."/>
            <person name="Roseboom W."/>
            <person name="Albracht S.P."/>
            <person name="Garcin E."/>
            <person name="Rousset M."/>
            <person name="Fontecilla-Camps J.C."/>
        </authorList>
    </citation>
    <scope>X-RAY CRYSTALLOGRAPHY (1.83 ANGSTROMS) OF 51-314 IN COMPLEX WITH HYDB AND IRON-SULFUR CLUSTERS</scope>
</reference>
<evidence type="ECO:0000255" key="1">
    <source>
        <dbReference type="PROSITE-ProRule" id="PRU00648"/>
    </source>
</evidence>
<evidence type="ECO:0000269" key="2">
    <source>
    </source>
</evidence>
<evidence type="ECO:0000269" key="3">
    <source>
    </source>
</evidence>
<evidence type="ECO:0000269" key="4">
    <source>
    </source>
</evidence>
<evidence type="ECO:0000305" key="5"/>
<evidence type="ECO:0007829" key="6">
    <source>
        <dbReference type="PDB" id="4UE2"/>
    </source>
</evidence>
<evidence type="ECO:0007829" key="7">
    <source>
        <dbReference type="PDB" id="4UQL"/>
    </source>
</evidence>
<dbReference type="EC" id="1.12.2.1"/>
<dbReference type="EMBL" id="M35333">
    <property type="protein sequence ID" value="AAA23371.2"/>
    <property type="molecule type" value="Genomic_DNA"/>
</dbReference>
<dbReference type="PIR" id="JQ0761">
    <property type="entry name" value="S08198"/>
</dbReference>
<dbReference type="PDB" id="1FRF">
    <property type="method" value="X-ray"/>
    <property type="resolution" value="2.70 A"/>
    <property type="chains" value="S=51-161, S=163-314"/>
</dbReference>
<dbReference type="PDB" id="1YQW">
    <property type="method" value="X-ray"/>
    <property type="resolution" value="1.83 A"/>
    <property type="chains" value="A/B/C=51-314"/>
</dbReference>
<dbReference type="PDB" id="1YRQ">
    <property type="method" value="X-ray"/>
    <property type="resolution" value="2.10 A"/>
    <property type="chains" value="A/B/C/D/F/G=51-314"/>
</dbReference>
<dbReference type="PDB" id="3CUR">
    <property type="method" value="X-ray"/>
    <property type="resolution" value="2.40 A"/>
    <property type="chains" value="A/B/C=51-314"/>
</dbReference>
<dbReference type="PDB" id="3CUS">
    <property type="method" value="X-ray"/>
    <property type="resolution" value="2.20 A"/>
    <property type="chains" value="A/B/C=51-314"/>
</dbReference>
<dbReference type="PDB" id="3H3X">
    <property type="method" value="X-ray"/>
    <property type="resolution" value="2.70 A"/>
    <property type="chains" value="A/B/C=51-314"/>
</dbReference>
<dbReference type="PDB" id="4UCQ">
    <property type="method" value="X-ray"/>
    <property type="resolution" value="2.60 A"/>
    <property type="chains" value="A/B/C=51-314"/>
</dbReference>
<dbReference type="PDB" id="4UCW">
    <property type="method" value="X-ray"/>
    <property type="resolution" value="2.30 A"/>
    <property type="chains" value="A/B/C=51-314"/>
</dbReference>
<dbReference type="PDB" id="4UCX">
    <property type="method" value="X-ray"/>
    <property type="resolution" value="1.95 A"/>
    <property type="chains" value="A/B/C=51-314"/>
</dbReference>
<dbReference type="PDB" id="4UE2">
    <property type="method" value="X-ray"/>
    <property type="resolution" value="2.02 A"/>
    <property type="chains" value="A/B/C=51-314"/>
</dbReference>
<dbReference type="PDB" id="4UE6">
    <property type="method" value="X-ray"/>
    <property type="resolution" value="2.30 A"/>
    <property type="chains" value="A/B/C=51-314"/>
</dbReference>
<dbReference type="PDB" id="4UEW">
    <property type="method" value="X-ray"/>
    <property type="resolution" value="2.08 A"/>
    <property type="chains" value="A/B/C=51-314"/>
</dbReference>
<dbReference type="PDB" id="4UPE">
    <property type="method" value="X-ray"/>
    <property type="resolution" value="1.80 A"/>
    <property type="chains" value="A/B/C=50-314"/>
</dbReference>
<dbReference type="PDB" id="4UPV">
    <property type="method" value="X-ray"/>
    <property type="resolution" value="1.52 A"/>
    <property type="chains" value="A/B=50-314"/>
</dbReference>
<dbReference type="PDB" id="4UQL">
    <property type="method" value="X-ray"/>
    <property type="resolution" value="1.22 A"/>
    <property type="chains" value="A/B=50-314"/>
</dbReference>
<dbReference type="PDB" id="4UQP">
    <property type="method" value="X-ray"/>
    <property type="resolution" value="1.42 A"/>
    <property type="chains" value="A/B=50-314"/>
</dbReference>
<dbReference type="PDB" id="4URH">
    <property type="method" value="X-ray"/>
    <property type="resolution" value="1.44 A"/>
    <property type="chains" value="A/B/C=50-314"/>
</dbReference>
<dbReference type="PDBsum" id="1FRF"/>
<dbReference type="PDBsum" id="1YQW"/>
<dbReference type="PDBsum" id="1YRQ"/>
<dbReference type="PDBsum" id="3CUR"/>
<dbReference type="PDBsum" id="3CUS"/>
<dbReference type="PDBsum" id="3H3X"/>
<dbReference type="PDBsum" id="4UCQ"/>
<dbReference type="PDBsum" id="4UCW"/>
<dbReference type="PDBsum" id="4UCX"/>
<dbReference type="PDBsum" id="4UE2"/>
<dbReference type="PDBsum" id="4UE6"/>
<dbReference type="PDBsum" id="4UEW"/>
<dbReference type="PDBsum" id="4UPE"/>
<dbReference type="PDBsum" id="4UPV"/>
<dbReference type="PDBsum" id="4UQL"/>
<dbReference type="PDBsum" id="4UQP"/>
<dbReference type="PDBsum" id="4URH"/>
<dbReference type="SMR" id="P18187"/>
<dbReference type="DIP" id="DIP-6172N"/>
<dbReference type="MINT" id="P18187"/>
<dbReference type="BRENDA" id="1.12.2.1">
    <property type="organism ID" value="1906"/>
</dbReference>
<dbReference type="EvolutionaryTrace" id="P18187"/>
<dbReference type="GO" id="GO:0044569">
    <property type="term" value="C:[Ni-Fe] hydrogenase complex"/>
    <property type="evidence" value="ECO:0007669"/>
    <property type="project" value="TreeGrafter"/>
</dbReference>
<dbReference type="GO" id="GO:0009375">
    <property type="term" value="C:ferredoxin hydrogenase complex"/>
    <property type="evidence" value="ECO:0007669"/>
    <property type="project" value="InterPro"/>
</dbReference>
<dbReference type="GO" id="GO:0016020">
    <property type="term" value="C:membrane"/>
    <property type="evidence" value="ECO:0007669"/>
    <property type="project" value="TreeGrafter"/>
</dbReference>
<dbReference type="GO" id="GO:0042597">
    <property type="term" value="C:periplasmic space"/>
    <property type="evidence" value="ECO:0007669"/>
    <property type="project" value="UniProtKB-SubCell"/>
</dbReference>
<dbReference type="GO" id="GO:0051538">
    <property type="term" value="F:3 iron, 4 sulfur cluster binding"/>
    <property type="evidence" value="ECO:0007669"/>
    <property type="project" value="UniProtKB-KW"/>
</dbReference>
<dbReference type="GO" id="GO:0051539">
    <property type="term" value="F:4 iron, 4 sulfur cluster binding"/>
    <property type="evidence" value="ECO:0007669"/>
    <property type="project" value="UniProtKB-KW"/>
</dbReference>
<dbReference type="GO" id="GO:0047806">
    <property type="term" value="F:cytochrome-c3 hydrogenase activity"/>
    <property type="evidence" value="ECO:0007669"/>
    <property type="project" value="UniProtKB-EC"/>
</dbReference>
<dbReference type="GO" id="GO:0009055">
    <property type="term" value="F:electron transfer activity"/>
    <property type="evidence" value="ECO:0007669"/>
    <property type="project" value="TreeGrafter"/>
</dbReference>
<dbReference type="GO" id="GO:0008901">
    <property type="term" value="F:ferredoxin hydrogenase activity"/>
    <property type="evidence" value="ECO:0007669"/>
    <property type="project" value="InterPro"/>
</dbReference>
<dbReference type="GO" id="GO:0046872">
    <property type="term" value="F:metal ion binding"/>
    <property type="evidence" value="ECO:0007669"/>
    <property type="project" value="UniProtKB-KW"/>
</dbReference>
<dbReference type="GO" id="GO:0009061">
    <property type="term" value="P:anaerobic respiration"/>
    <property type="evidence" value="ECO:0007669"/>
    <property type="project" value="TreeGrafter"/>
</dbReference>
<dbReference type="Gene3D" id="4.10.480.10">
    <property type="entry name" value="Cytochrome-c3 hydrogenase, C-terminal domain"/>
    <property type="match status" value="1"/>
</dbReference>
<dbReference type="Gene3D" id="3.40.50.700">
    <property type="entry name" value="NADH:ubiquinone oxidoreductase-like, 20kDa subunit"/>
    <property type="match status" value="1"/>
</dbReference>
<dbReference type="InterPro" id="IPR027394">
    <property type="entry name" value="Cytochrome-c3_hydrogenase_C"/>
</dbReference>
<dbReference type="InterPro" id="IPR006137">
    <property type="entry name" value="NADH_UbQ_OxRdtase-like_20kDa"/>
</dbReference>
<dbReference type="InterPro" id="IPR037148">
    <property type="entry name" value="NiFe-Hase_small_C_sf"/>
</dbReference>
<dbReference type="InterPro" id="IPR037024">
    <property type="entry name" value="NiFe_Hase_small_N_sf"/>
</dbReference>
<dbReference type="InterPro" id="IPR001821">
    <property type="entry name" value="NiFe_hydrogenase_ssu"/>
</dbReference>
<dbReference type="InterPro" id="IPR006311">
    <property type="entry name" value="TAT_signal"/>
</dbReference>
<dbReference type="InterPro" id="IPR019546">
    <property type="entry name" value="TAT_signal_bac_arc"/>
</dbReference>
<dbReference type="NCBIfam" id="TIGR00391">
    <property type="entry name" value="hydA"/>
    <property type="match status" value="1"/>
</dbReference>
<dbReference type="NCBIfam" id="TIGR01409">
    <property type="entry name" value="TAT_signal_seq"/>
    <property type="match status" value="1"/>
</dbReference>
<dbReference type="PANTHER" id="PTHR30013:SF7">
    <property type="entry name" value="HYDROGENASE-2 SMALL CHAIN"/>
    <property type="match status" value="1"/>
</dbReference>
<dbReference type="PANTHER" id="PTHR30013">
    <property type="entry name" value="NIFE / NIFESE HYDROGENASE SMALL SUBUNIT FAMILY MEMBER"/>
    <property type="match status" value="1"/>
</dbReference>
<dbReference type="Pfam" id="PF14720">
    <property type="entry name" value="NiFe_hyd_SSU_C"/>
    <property type="match status" value="1"/>
</dbReference>
<dbReference type="Pfam" id="PF01058">
    <property type="entry name" value="Oxidored_q6"/>
    <property type="match status" value="1"/>
</dbReference>
<dbReference type="PIRSF" id="PIRSF000310">
    <property type="entry name" value="NiFe_hyd_ssu"/>
    <property type="match status" value="1"/>
</dbReference>
<dbReference type="PRINTS" id="PR00614">
    <property type="entry name" value="NIHGNASESMLL"/>
</dbReference>
<dbReference type="SUPFAM" id="SSF56770">
    <property type="entry name" value="HydA/Nqo6-like"/>
    <property type="match status" value="1"/>
</dbReference>
<dbReference type="PROSITE" id="PS51318">
    <property type="entry name" value="TAT"/>
    <property type="match status" value="1"/>
</dbReference>
<proteinExistence type="evidence at protein level"/>
<sequence>MNFSVGLGRDDAEKRLVQNGVSRRDFMKFCATVAAAMGMGPAFAPKVAEALTAKHRPSVVWLHNAECTGCTEAAIRTIKPYIDALILDTISLDYQETIMAAAGEAAEAALHQALEGKDGYYLVVEGGLPTIDGGQWGMVAGHPMIETTKKAAAKAKGIICIGTCSAYGGVQKAKPNPSQAKGVSEALGVKTINIPGCPPNPINFVGAVVHVLTKGIPDLDENGRPKLFYGELVHDNCPRLPHFEASEFAPSFDSEEAKKGFCLYELGCKGPVTYNNCPKVLFNQVNWPVQAGHPCLGCSEPDFWDTMTPFYEQG</sequence>
<name>PHNS_SOLFR</name>
<accession>P18187</accession>
<protein>
    <recommendedName>
        <fullName>Periplasmic [NiFe] hydrogenase small subunit</fullName>
        <ecNumber>1.12.2.1</ecNumber>
    </recommendedName>
    <alternativeName>
        <fullName>NiFe hydrogenlyase small chain</fullName>
    </alternativeName>
</protein>
<keyword id="KW-0002">3D-structure</keyword>
<keyword id="KW-0003">3Fe-4S</keyword>
<keyword id="KW-0004">4Fe-4S</keyword>
<keyword id="KW-0903">Direct protein sequencing</keyword>
<keyword id="KW-0408">Iron</keyword>
<keyword id="KW-0411">Iron-sulfur</keyword>
<keyword id="KW-0479">Metal-binding</keyword>
<keyword id="KW-0560">Oxidoreductase</keyword>
<keyword id="KW-0574">Periplasm</keyword>
<keyword id="KW-0732">Signal</keyword>
<gene>
    <name type="primary">hydA</name>
</gene>